<comment type="subcellular location">
    <subcellularLocation>
        <location>Secreted</location>
    </subcellularLocation>
</comment>
<comment type="allergen">
    <text>Causes an allergic reaction in human. Common symptoms of mite allergy are bronchial asthma, allergic rhinitis and conjunctivitis.</text>
</comment>
<comment type="similarity">
    <text evidence="2">Belongs to the mite group 7 allergen family.</text>
</comment>
<reference key="1">
    <citation type="journal article" date="1995" name="Clin. Exp. Allergy">
        <title>Molecular cloning and immunological characterization of the house dust mite allergen Der f 7.</title>
        <authorList>
            <person name="Shen H.-D."/>
            <person name="Chua K.-Y."/>
            <person name="Lin W.L."/>
            <person name="Hsieh K.-H."/>
            <person name="Thomas W.R."/>
        </authorList>
    </citation>
    <scope>NUCLEOTIDE SEQUENCE [MRNA]</scope>
</reference>
<sequence>MMKFLLIAAVAFVAVSADPIHYDKITEEINKAIDDAIAAIEQSETIDPMKVPDHADKFERHVGIVDFKGELAMRNIEARGLKQMKRQGDANVKGEEGIVKAHLLIGVHDDIVSMEYDLAYKLGDLHPTTHVISDIQDFVVALSLEISDEGNITMTSFEVRQFANVVNHIGGLSILDPIFGVLSDVLTAIFQDTVRKEMTKVLAPAFKRELEKN</sequence>
<organism>
    <name type="scientific">Dermatophagoides farinae</name>
    <name type="common">American house dust mite</name>
    <dbReference type="NCBI Taxonomy" id="6954"/>
    <lineage>
        <taxon>Eukaryota</taxon>
        <taxon>Metazoa</taxon>
        <taxon>Ecdysozoa</taxon>
        <taxon>Arthropoda</taxon>
        <taxon>Chelicerata</taxon>
        <taxon>Arachnida</taxon>
        <taxon>Acari</taxon>
        <taxon>Acariformes</taxon>
        <taxon>Sarcoptiformes</taxon>
        <taxon>Astigmata</taxon>
        <taxon>Psoroptidia</taxon>
        <taxon>Analgoidea</taxon>
        <taxon>Pyroglyphidae</taxon>
        <taxon>Dermatophagoidinae</taxon>
        <taxon>Dermatophagoides</taxon>
    </lineage>
</organism>
<keyword id="KW-0002">3D-structure</keyword>
<keyword id="KW-0020">Allergen</keyword>
<keyword id="KW-0325">Glycoprotein</keyword>
<keyword id="KW-0964">Secreted</keyword>
<keyword id="KW-0732">Signal</keyword>
<name>ALL7_DERFA</name>
<proteinExistence type="evidence at protein level"/>
<protein>
    <recommendedName>
        <fullName>Mite allergen Der f 7</fullName>
    </recommendedName>
    <alternativeName>
        <fullName>Allergen Der f VII</fullName>
    </alternativeName>
    <allergenName>Der f 7</allergenName>
</protein>
<dbReference type="EMBL" id="S80655">
    <property type="protein sequence ID" value="AAB35977.1"/>
    <property type="molecule type" value="mRNA"/>
</dbReference>
<dbReference type="PDB" id="3UV1">
    <property type="method" value="X-ray"/>
    <property type="resolution" value="2.00 A"/>
    <property type="chains" value="A/B=18-213"/>
</dbReference>
<dbReference type="PDB" id="9HAE">
    <property type="method" value="X-ray"/>
    <property type="resolution" value="2.22 A"/>
    <property type="chains" value="A/C=18-213"/>
</dbReference>
<dbReference type="PDB" id="9HAF">
    <property type="method" value="X-ray"/>
    <property type="resolution" value="2.99 A"/>
    <property type="chains" value="A/C/E=18-213"/>
</dbReference>
<dbReference type="PDBsum" id="3UV1"/>
<dbReference type="PDBsum" id="9HAE"/>
<dbReference type="PDBsum" id="9HAF"/>
<dbReference type="SMR" id="Q26456"/>
<dbReference type="Allergome" id="307">
    <property type="allergen name" value="Der f 7"/>
</dbReference>
<dbReference type="Allergome" id="3256">
    <property type="allergen name" value="Der f 7.0101"/>
</dbReference>
<dbReference type="GlyCosmos" id="Q26456">
    <property type="glycosylation" value="1 site, No reported glycans"/>
</dbReference>
<dbReference type="GO" id="GO:0005576">
    <property type="term" value="C:extracellular region"/>
    <property type="evidence" value="ECO:0007669"/>
    <property type="project" value="UniProtKB-SubCell"/>
</dbReference>
<dbReference type="Gene3D" id="3.15.10.50">
    <property type="match status" value="1"/>
</dbReference>
<dbReference type="InterPro" id="IPR038602">
    <property type="entry name" value="Mite_allergen_7_sf"/>
</dbReference>
<dbReference type="InterPro" id="IPR020234">
    <property type="entry name" value="Mite_allergen_group-7"/>
</dbReference>
<dbReference type="Pfam" id="PF16984">
    <property type="entry name" value="Grp7_allergen"/>
    <property type="match status" value="1"/>
</dbReference>
<evidence type="ECO:0000255" key="1"/>
<evidence type="ECO:0000305" key="2"/>
<evidence type="ECO:0007829" key="3">
    <source>
        <dbReference type="PDB" id="3UV1"/>
    </source>
</evidence>
<accession>Q26456</accession>
<gene>
    <name type="primary">DERF7</name>
</gene>
<feature type="signal peptide" evidence="1">
    <location>
        <begin position="1"/>
        <end position="17"/>
    </location>
</feature>
<feature type="chain" id="PRO_0000001184" description="Mite allergen Der f 7">
    <location>
        <begin position="18"/>
        <end position="213"/>
    </location>
</feature>
<feature type="glycosylation site" description="N-linked (GlcNAc...) asparagine" evidence="1">
    <location>
        <position position="151"/>
    </location>
</feature>
<feature type="helix" evidence="3">
    <location>
        <begin position="24"/>
        <end position="41"/>
    </location>
</feature>
<feature type="strand" evidence="3">
    <location>
        <begin position="43"/>
        <end position="51"/>
    </location>
</feature>
<feature type="strand" evidence="3">
    <location>
        <begin position="54"/>
        <end position="61"/>
    </location>
</feature>
<feature type="strand" evidence="3">
    <location>
        <begin position="63"/>
        <end position="79"/>
    </location>
</feature>
<feature type="helix" evidence="3">
    <location>
        <begin position="81"/>
        <end position="83"/>
    </location>
</feature>
<feature type="strand" evidence="3">
    <location>
        <begin position="84"/>
        <end position="89"/>
    </location>
</feature>
<feature type="strand" evidence="3">
    <location>
        <begin position="91"/>
        <end position="95"/>
    </location>
</feature>
<feature type="strand" evidence="3">
    <location>
        <begin position="98"/>
        <end position="110"/>
    </location>
</feature>
<feature type="strand" evidence="3">
    <location>
        <begin position="112"/>
        <end position="122"/>
    </location>
</feature>
<feature type="strand" evidence="3">
    <location>
        <begin position="128"/>
        <end position="136"/>
    </location>
</feature>
<feature type="strand" evidence="3">
    <location>
        <begin position="139"/>
        <end position="150"/>
    </location>
</feature>
<feature type="strand" evidence="3">
    <location>
        <begin position="153"/>
        <end position="159"/>
    </location>
</feature>
<feature type="strand" evidence="3">
    <location>
        <begin position="163"/>
        <end position="169"/>
    </location>
</feature>
<feature type="helix" evidence="3">
    <location>
        <begin position="177"/>
        <end position="211"/>
    </location>
</feature>